<protein>
    <recommendedName>
        <fullName evidence="1">Tryptophan synthase beta chain</fullName>
        <ecNumber evidence="1">4.2.1.20</ecNumber>
    </recommendedName>
</protein>
<feature type="chain" id="PRO_0000098971" description="Tryptophan synthase beta chain">
    <location>
        <begin position="1"/>
        <end position="400"/>
    </location>
</feature>
<feature type="modified residue" description="N6-(pyridoxal phosphate)lysine" evidence="1">
    <location>
        <position position="92"/>
    </location>
</feature>
<keyword id="KW-0028">Amino-acid biosynthesis</keyword>
<keyword id="KW-0057">Aromatic amino acid biosynthesis</keyword>
<keyword id="KW-0456">Lyase</keyword>
<keyword id="KW-0663">Pyridoxal phosphate</keyword>
<keyword id="KW-0822">Tryptophan biosynthesis</keyword>
<sequence length="400" mass="43549">MKNYHAPDEKGFFGEHGGLYVSETLIPALKELEQAYNEAKNDPEFWAEFRRDLKHYVGRPSPVYHAARLSEHLGGAQIWLKREDLNHTGAHKVNNTIGQALLARRMGKKRVIAETGAGQHGVASATVAARFGMTSDVYMGADDIQRQMPNVFRMKLLGANVIGVDSGSRTLKDAMNEAMREWVARVDDTFYIIGTAAGPAPYPEMVRDFQCVIGNEAKAQMQEATGRQPDVAVACVGGGSNAIGLFYPYIEEENVRLVGVEAGGLDVDTPDHAAPITSGAPIGVLHGFRSYLMQDENGQVLGTHSVSAGLDYPGIGPEHSHLHDIKRVEYTVAKDDEALEAFDLLCRFEGIIPALESSHVVGSGDKTRRKMGKDQVILVNLSGRGDKDINTVAKLKGIEL</sequence>
<evidence type="ECO:0000255" key="1">
    <source>
        <dbReference type="HAMAP-Rule" id="MF_00133"/>
    </source>
</evidence>
<dbReference type="EC" id="4.2.1.20" evidence="1"/>
<dbReference type="EMBL" id="AY165022">
    <property type="protein sequence ID" value="AAN65176.1"/>
    <property type="molecule type" value="Genomic_DNA"/>
</dbReference>
<dbReference type="SMR" id="Q84GJ9"/>
<dbReference type="UniPathway" id="UPA00035">
    <property type="reaction ID" value="UER00044"/>
</dbReference>
<dbReference type="GO" id="GO:0005737">
    <property type="term" value="C:cytoplasm"/>
    <property type="evidence" value="ECO:0007669"/>
    <property type="project" value="TreeGrafter"/>
</dbReference>
<dbReference type="GO" id="GO:0004834">
    <property type="term" value="F:tryptophan synthase activity"/>
    <property type="evidence" value="ECO:0007669"/>
    <property type="project" value="UniProtKB-UniRule"/>
</dbReference>
<dbReference type="CDD" id="cd06446">
    <property type="entry name" value="Trp-synth_B"/>
    <property type="match status" value="1"/>
</dbReference>
<dbReference type="FunFam" id="3.40.50.1100:FF:000001">
    <property type="entry name" value="Tryptophan synthase beta chain"/>
    <property type="match status" value="1"/>
</dbReference>
<dbReference type="FunFam" id="3.40.50.1100:FF:000004">
    <property type="entry name" value="Tryptophan synthase beta chain"/>
    <property type="match status" value="1"/>
</dbReference>
<dbReference type="Gene3D" id="3.40.50.1100">
    <property type="match status" value="2"/>
</dbReference>
<dbReference type="HAMAP" id="MF_00133">
    <property type="entry name" value="Trp_synth_beta"/>
    <property type="match status" value="1"/>
</dbReference>
<dbReference type="InterPro" id="IPR006653">
    <property type="entry name" value="Trp_synth_b_CS"/>
</dbReference>
<dbReference type="InterPro" id="IPR006654">
    <property type="entry name" value="Trp_synth_beta"/>
</dbReference>
<dbReference type="InterPro" id="IPR023026">
    <property type="entry name" value="Trp_synth_beta/beta-like"/>
</dbReference>
<dbReference type="InterPro" id="IPR001926">
    <property type="entry name" value="TrpB-like_PALP"/>
</dbReference>
<dbReference type="InterPro" id="IPR036052">
    <property type="entry name" value="TrpB-like_PALP_sf"/>
</dbReference>
<dbReference type="NCBIfam" id="TIGR00263">
    <property type="entry name" value="trpB"/>
    <property type="match status" value="1"/>
</dbReference>
<dbReference type="PANTHER" id="PTHR48077:SF3">
    <property type="entry name" value="TRYPTOPHAN SYNTHASE"/>
    <property type="match status" value="1"/>
</dbReference>
<dbReference type="PANTHER" id="PTHR48077">
    <property type="entry name" value="TRYPTOPHAN SYNTHASE-RELATED"/>
    <property type="match status" value="1"/>
</dbReference>
<dbReference type="Pfam" id="PF00291">
    <property type="entry name" value="PALP"/>
    <property type="match status" value="1"/>
</dbReference>
<dbReference type="PIRSF" id="PIRSF001413">
    <property type="entry name" value="Trp_syn_beta"/>
    <property type="match status" value="1"/>
</dbReference>
<dbReference type="SUPFAM" id="SSF53686">
    <property type="entry name" value="Tryptophan synthase beta subunit-like PLP-dependent enzymes"/>
    <property type="match status" value="1"/>
</dbReference>
<dbReference type="PROSITE" id="PS00168">
    <property type="entry name" value="TRP_SYNTHASE_BETA"/>
    <property type="match status" value="1"/>
</dbReference>
<proteinExistence type="inferred from homology"/>
<organism>
    <name type="scientific">Neisseria gonorrhoeae</name>
    <dbReference type="NCBI Taxonomy" id="485"/>
    <lineage>
        <taxon>Bacteria</taxon>
        <taxon>Pseudomonadati</taxon>
        <taxon>Pseudomonadota</taxon>
        <taxon>Betaproteobacteria</taxon>
        <taxon>Neisseriales</taxon>
        <taxon>Neisseriaceae</taxon>
        <taxon>Neisseria</taxon>
    </lineage>
</organism>
<accession>Q84GJ9</accession>
<reference key="1">
    <citation type="journal article" date="2003" name="Mol. Genet. Genomics">
        <title>The integration site of the iga gene in commensal Neisseria sp.</title>
        <authorList>
            <person name="Jose J."/>
            <person name="Otto G.W."/>
            <person name="Meyer T.F."/>
        </authorList>
    </citation>
    <scope>NUCLEOTIDE SEQUENCE [GENOMIC DNA]</scope>
    <source>
        <strain>MS11</strain>
    </source>
</reference>
<comment type="function">
    <text evidence="1">The beta subunit is responsible for the synthesis of L-tryptophan from indole and L-serine.</text>
</comment>
<comment type="catalytic activity">
    <reaction evidence="1">
        <text>(1S,2R)-1-C-(indol-3-yl)glycerol 3-phosphate + L-serine = D-glyceraldehyde 3-phosphate + L-tryptophan + H2O</text>
        <dbReference type="Rhea" id="RHEA:10532"/>
        <dbReference type="ChEBI" id="CHEBI:15377"/>
        <dbReference type="ChEBI" id="CHEBI:33384"/>
        <dbReference type="ChEBI" id="CHEBI:57912"/>
        <dbReference type="ChEBI" id="CHEBI:58866"/>
        <dbReference type="ChEBI" id="CHEBI:59776"/>
        <dbReference type="EC" id="4.2.1.20"/>
    </reaction>
</comment>
<comment type="cofactor">
    <cofactor evidence="1">
        <name>pyridoxal 5'-phosphate</name>
        <dbReference type="ChEBI" id="CHEBI:597326"/>
    </cofactor>
</comment>
<comment type="pathway">
    <text evidence="1">Amino-acid biosynthesis; L-tryptophan biosynthesis; L-tryptophan from chorismate: step 5/5.</text>
</comment>
<comment type="subunit">
    <text evidence="1">Tetramer of two alpha and two beta chains.</text>
</comment>
<comment type="similarity">
    <text evidence="1">Belongs to the TrpB family.</text>
</comment>
<name>TRPB_NEIGO</name>
<gene>
    <name evidence="1" type="primary">trpB</name>
</gene>